<name>GLYA_STAAE</name>
<proteinExistence type="inferred from homology"/>
<evidence type="ECO:0000255" key="1">
    <source>
        <dbReference type="HAMAP-Rule" id="MF_00051"/>
    </source>
</evidence>
<protein>
    <recommendedName>
        <fullName evidence="1">Serine hydroxymethyltransferase</fullName>
        <shortName evidence="1">SHMT</shortName>
        <shortName evidence="1">Serine methylase</shortName>
        <ecNumber evidence="1">2.1.2.1</ecNumber>
    </recommendedName>
</protein>
<sequence>MSYITKQDKVIAEAIEREFQRQNSNIELIASENFVSEAVMEAQGSVLTNKYAEGYPGRRYYGGCEFVDVTESIAIDRAKALFGAEHVNVQPHSGSQANMAVYLVALEMGDTVLGMNLSHGGHLTHGAPVNFSGKFYNFVEYGVDKDTERINYDEVRKLALEHKPKLIVAGASAYSRTIDFKKFKEIADEVNAKLMVDMAHIAGLVAAGLHPNPVEYADFVTTTTHKTLRGPRGGMILCKEEYKKDIDKTIFPGIQGGPLEHVIAAKAVAFGEALENNFKTYQQQVVKNAKVLAEALINEGFRIVSGGTDNHLVAVDVKGSIGLTGKEAEETLDSVGITCNKNTIPFDQEKPFVTSGIRLGTPAATTRGFDEKAFEEVAKIISLALKNSKDEEKLQQAKERVAKLTAEYPLYQ</sequence>
<accession>A6QIV7</accession>
<organism>
    <name type="scientific">Staphylococcus aureus (strain Newman)</name>
    <dbReference type="NCBI Taxonomy" id="426430"/>
    <lineage>
        <taxon>Bacteria</taxon>
        <taxon>Bacillati</taxon>
        <taxon>Bacillota</taxon>
        <taxon>Bacilli</taxon>
        <taxon>Bacillales</taxon>
        <taxon>Staphylococcaceae</taxon>
        <taxon>Staphylococcus</taxon>
    </lineage>
</organism>
<reference key="1">
    <citation type="journal article" date="2008" name="J. Bacteriol.">
        <title>Genome sequence of Staphylococcus aureus strain Newman and comparative analysis of staphylococcal genomes: polymorphism and evolution of two major pathogenicity islands.</title>
        <authorList>
            <person name="Baba T."/>
            <person name="Bae T."/>
            <person name="Schneewind O."/>
            <person name="Takeuchi F."/>
            <person name="Hiramatsu K."/>
        </authorList>
    </citation>
    <scope>NUCLEOTIDE SEQUENCE [LARGE SCALE GENOMIC DNA]</scope>
    <source>
        <strain>Newman</strain>
    </source>
</reference>
<gene>
    <name evidence="1" type="primary">glyA</name>
    <name type="ordered locus">NWMN_2017</name>
</gene>
<dbReference type="EC" id="2.1.2.1" evidence="1"/>
<dbReference type="EMBL" id="AP009351">
    <property type="protein sequence ID" value="BAF68289.1"/>
    <property type="molecule type" value="Genomic_DNA"/>
</dbReference>
<dbReference type="RefSeq" id="WP_000120494.1">
    <property type="nucleotide sequence ID" value="NZ_JBBIAE010000008.1"/>
</dbReference>
<dbReference type="SMR" id="A6QIV7"/>
<dbReference type="KEGG" id="sae:NWMN_2017"/>
<dbReference type="HOGENOM" id="CLU_022477_2_1_9"/>
<dbReference type="UniPathway" id="UPA00193"/>
<dbReference type="UniPathway" id="UPA00288">
    <property type="reaction ID" value="UER01023"/>
</dbReference>
<dbReference type="Proteomes" id="UP000006386">
    <property type="component" value="Chromosome"/>
</dbReference>
<dbReference type="GO" id="GO:0005829">
    <property type="term" value="C:cytosol"/>
    <property type="evidence" value="ECO:0007669"/>
    <property type="project" value="TreeGrafter"/>
</dbReference>
<dbReference type="GO" id="GO:0004372">
    <property type="term" value="F:glycine hydroxymethyltransferase activity"/>
    <property type="evidence" value="ECO:0007669"/>
    <property type="project" value="UniProtKB-UniRule"/>
</dbReference>
<dbReference type="GO" id="GO:0030170">
    <property type="term" value="F:pyridoxal phosphate binding"/>
    <property type="evidence" value="ECO:0007669"/>
    <property type="project" value="UniProtKB-UniRule"/>
</dbReference>
<dbReference type="GO" id="GO:0019264">
    <property type="term" value="P:glycine biosynthetic process from serine"/>
    <property type="evidence" value="ECO:0007669"/>
    <property type="project" value="UniProtKB-UniRule"/>
</dbReference>
<dbReference type="GO" id="GO:0035999">
    <property type="term" value="P:tetrahydrofolate interconversion"/>
    <property type="evidence" value="ECO:0007669"/>
    <property type="project" value="UniProtKB-UniRule"/>
</dbReference>
<dbReference type="CDD" id="cd00378">
    <property type="entry name" value="SHMT"/>
    <property type="match status" value="1"/>
</dbReference>
<dbReference type="FunFam" id="3.40.640.10:FF:000001">
    <property type="entry name" value="Serine hydroxymethyltransferase"/>
    <property type="match status" value="1"/>
</dbReference>
<dbReference type="FunFam" id="3.90.1150.10:FF:000003">
    <property type="entry name" value="Serine hydroxymethyltransferase"/>
    <property type="match status" value="1"/>
</dbReference>
<dbReference type="Gene3D" id="3.90.1150.10">
    <property type="entry name" value="Aspartate Aminotransferase, domain 1"/>
    <property type="match status" value="1"/>
</dbReference>
<dbReference type="Gene3D" id="3.40.640.10">
    <property type="entry name" value="Type I PLP-dependent aspartate aminotransferase-like (Major domain)"/>
    <property type="match status" value="1"/>
</dbReference>
<dbReference type="HAMAP" id="MF_00051">
    <property type="entry name" value="SHMT"/>
    <property type="match status" value="1"/>
</dbReference>
<dbReference type="InterPro" id="IPR015424">
    <property type="entry name" value="PyrdxlP-dep_Trfase"/>
</dbReference>
<dbReference type="InterPro" id="IPR015421">
    <property type="entry name" value="PyrdxlP-dep_Trfase_major"/>
</dbReference>
<dbReference type="InterPro" id="IPR015422">
    <property type="entry name" value="PyrdxlP-dep_Trfase_small"/>
</dbReference>
<dbReference type="InterPro" id="IPR001085">
    <property type="entry name" value="Ser_HO-MeTrfase"/>
</dbReference>
<dbReference type="InterPro" id="IPR049943">
    <property type="entry name" value="Ser_HO-MeTrfase-like"/>
</dbReference>
<dbReference type="InterPro" id="IPR019798">
    <property type="entry name" value="Ser_HO-MeTrfase_PLP_BS"/>
</dbReference>
<dbReference type="InterPro" id="IPR039429">
    <property type="entry name" value="SHMT-like_dom"/>
</dbReference>
<dbReference type="NCBIfam" id="NF000586">
    <property type="entry name" value="PRK00011.1"/>
    <property type="match status" value="1"/>
</dbReference>
<dbReference type="PANTHER" id="PTHR11680">
    <property type="entry name" value="SERINE HYDROXYMETHYLTRANSFERASE"/>
    <property type="match status" value="1"/>
</dbReference>
<dbReference type="PANTHER" id="PTHR11680:SF35">
    <property type="entry name" value="SERINE HYDROXYMETHYLTRANSFERASE 1"/>
    <property type="match status" value="1"/>
</dbReference>
<dbReference type="Pfam" id="PF00464">
    <property type="entry name" value="SHMT"/>
    <property type="match status" value="1"/>
</dbReference>
<dbReference type="PIRSF" id="PIRSF000412">
    <property type="entry name" value="SHMT"/>
    <property type="match status" value="1"/>
</dbReference>
<dbReference type="SUPFAM" id="SSF53383">
    <property type="entry name" value="PLP-dependent transferases"/>
    <property type="match status" value="1"/>
</dbReference>
<dbReference type="PROSITE" id="PS00096">
    <property type="entry name" value="SHMT"/>
    <property type="match status" value="1"/>
</dbReference>
<feature type="chain" id="PRO_1000071133" description="Serine hydroxymethyltransferase">
    <location>
        <begin position="1"/>
        <end position="412"/>
    </location>
</feature>
<feature type="binding site" evidence="1">
    <location>
        <position position="117"/>
    </location>
    <ligand>
        <name>(6S)-5,6,7,8-tetrahydrofolate</name>
        <dbReference type="ChEBI" id="CHEBI:57453"/>
    </ligand>
</feature>
<feature type="binding site" evidence="1">
    <location>
        <begin position="121"/>
        <end position="123"/>
    </location>
    <ligand>
        <name>(6S)-5,6,7,8-tetrahydrofolate</name>
        <dbReference type="ChEBI" id="CHEBI:57453"/>
    </ligand>
</feature>
<feature type="site" description="Plays an important role in substrate specificity" evidence="1">
    <location>
        <position position="225"/>
    </location>
</feature>
<feature type="modified residue" description="N6-(pyridoxal phosphate)lysine" evidence="1">
    <location>
        <position position="226"/>
    </location>
</feature>
<comment type="function">
    <text evidence="1">Catalyzes the reversible interconversion of serine and glycine with tetrahydrofolate (THF) serving as the one-carbon carrier. This reaction serves as the major source of one-carbon groups required for the biosynthesis of purines, thymidylate, methionine, and other important biomolecules. Also exhibits THF-independent aldolase activity toward beta-hydroxyamino acids, producing glycine and aldehydes, via a retro-aldol mechanism.</text>
</comment>
<comment type="catalytic activity">
    <reaction evidence="1">
        <text>(6R)-5,10-methylene-5,6,7,8-tetrahydrofolate + glycine + H2O = (6S)-5,6,7,8-tetrahydrofolate + L-serine</text>
        <dbReference type="Rhea" id="RHEA:15481"/>
        <dbReference type="ChEBI" id="CHEBI:15377"/>
        <dbReference type="ChEBI" id="CHEBI:15636"/>
        <dbReference type="ChEBI" id="CHEBI:33384"/>
        <dbReference type="ChEBI" id="CHEBI:57305"/>
        <dbReference type="ChEBI" id="CHEBI:57453"/>
        <dbReference type="EC" id="2.1.2.1"/>
    </reaction>
</comment>
<comment type="cofactor">
    <cofactor evidence="1">
        <name>pyridoxal 5'-phosphate</name>
        <dbReference type="ChEBI" id="CHEBI:597326"/>
    </cofactor>
</comment>
<comment type="pathway">
    <text evidence="1">One-carbon metabolism; tetrahydrofolate interconversion.</text>
</comment>
<comment type="pathway">
    <text evidence="1">Amino-acid biosynthesis; glycine biosynthesis; glycine from L-serine: step 1/1.</text>
</comment>
<comment type="subunit">
    <text evidence="1">Homodimer.</text>
</comment>
<comment type="subcellular location">
    <subcellularLocation>
        <location evidence="1">Cytoplasm</location>
    </subcellularLocation>
</comment>
<comment type="similarity">
    <text evidence="1">Belongs to the SHMT family.</text>
</comment>
<keyword id="KW-0028">Amino-acid biosynthesis</keyword>
<keyword id="KW-0963">Cytoplasm</keyword>
<keyword id="KW-0554">One-carbon metabolism</keyword>
<keyword id="KW-0663">Pyridoxal phosphate</keyword>
<keyword id="KW-0808">Transferase</keyword>